<gene>
    <name evidence="1" type="primary">surE</name>
    <name type="ordered locus">Tola_2737</name>
</gene>
<reference key="1">
    <citation type="submission" date="2009-05" db="EMBL/GenBank/DDBJ databases">
        <title>Complete sequence of Tolumonas auensis DSM 9187.</title>
        <authorList>
            <consortium name="US DOE Joint Genome Institute"/>
            <person name="Lucas S."/>
            <person name="Copeland A."/>
            <person name="Lapidus A."/>
            <person name="Glavina del Rio T."/>
            <person name="Tice H."/>
            <person name="Bruce D."/>
            <person name="Goodwin L."/>
            <person name="Pitluck S."/>
            <person name="Chertkov O."/>
            <person name="Brettin T."/>
            <person name="Detter J.C."/>
            <person name="Han C."/>
            <person name="Larimer F."/>
            <person name="Land M."/>
            <person name="Hauser L."/>
            <person name="Kyrpides N."/>
            <person name="Mikhailova N."/>
            <person name="Spring S."/>
            <person name="Beller H."/>
        </authorList>
    </citation>
    <scope>NUCLEOTIDE SEQUENCE [LARGE SCALE GENOMIC DNA]</scope>
    <source>
        <strain>DSM 9187 / NBRC 110442 / TA 4</strain>
    </source>
</reference>
<organism>
    <name type="scientific">Tolumonas auensis (strain DSM 9187 / NBRC 110442 / TA 4)</name>
    <dbReference type="NCBI Taxonomy" id="595494"/>
    <lineage>
        <taxon>Bacteria</taxon>
        <taxon>Pseudomonadati</taxon>
        <taxon>Pseudomonadota</taxon>
        <taxon>Gammaproteobacteria</taxon>
        <taxon>Aeromonadales</taxon>
        <taxon>Aeromonadaceae</taxon>
        <taxon>Tolumonas</taxon>
    </lineage>
</organism>
<name>SURE_TOLAT</name>
<proteinExistence type="inferred from homology"/>
<evidence type="ECO:0000255" key="1">
    <source>
        <dbReference type="HAMAP-Rule" id="MF_00060"/>
    </source>
</evidence>
<comment type="function">
    <text evidence="1">Nucleotidase that shows phosphatase activity on nucleoside 5'-monophosphates.</text>
</comment>
<comment type="catalytic activity">
    <reaction evidence="1">
        <text>a ribonucleoside 5'-phosphate + H2O = a ribonucleoside + phosphate</text>
        <dbReference type="Rhea" id="RHEA:12484"/>
        <dbReference type="ChEBI" id="CHEBI:15377"/>
        <dbReference type="ChEBI" id="CHEBI:18254"/>
        <dbReference type="ChEBI" id="CHEBI:43474"/>
        <dbReference type="ChEBI" id="CHEBI:58043"/>
        <dbReference type="EC" id="3.1.3.5"/>
    </reaction>
</comment>
<comment type="cofactor">
    <cofactor evidence="1">
        <name>a divalent metal cation</name>
        <dbReference type="ChEBI" id="CHEBI:60240"/>
    </cofactor>
    <text evidence="1">Binds 1 divalent metal cation per subunit.</text>
</comment>
<comment type="subcellular location">
    <subcellularLocation>
        <location evidence="1">Cytoplasm</location>
    </subcellularLocation>
</comment>
<comment type="similarity">
    <text evidence="1">Belongs to the SurE nucleotidase family.</text>
</comment>
<dbReference type="EC" id="3.1.3.5" evidence="1"/>
<dbReference type="EMBL" id="CP001616">
    <property type="protein sequence ID" value="ACQ94330.1"/>
    <property type="molecule type" value="Genomic_DNA"/>
</dbReference>
<dbReference type="RefSeq" id="WP_015879779.1">
    <property type="nucleotide sequence ID" value="NC_012691.1"/>
</dbReference>
<dbReference type="SMR" id="C4LBQ6"/>
<dbReference type="STRING" id="595494.Tola_2737"/>
<dbReference type="KEGG" id="tau:Tola_2737"/>
<dbReference type="eggNOG" id="COG0496">
    <property type="taxonomic scope" value="Bacteria"/>
</dbReference>
<dbReference type="HOGENOM" id="CLU_045192_1_2_6"/>
<dbReference type="OrthoDB" id="9780815at2"/>
<dbReference type="Proteomes" id="UP000009073">
    <property type="component" value="Chromosome"/>
</dbReference>
<dbReference type="GO" id="GO:0005737">
    <property type="term" value="C:cytoplasm"/>
    <property type="evidence" value="ECO:0007669"/>
    <property type="project" value="UniProtKB-SubCell"/>
</dbReference>
<dbReference type="GO" id="GO:0008254">
    <property type="term" value="F:3'-nucleotidase activity"/>
    <property type="evidence" value="ECO:0007669"/>
    <property type="project" value="TreeGrafter"/>
</dbReference>
<dbReference type="GO" id="GO:0008253">
    <property type="term" value="F:5'-nucleotidase activity"/>
    <property type="evidence" value="ECO:0007669"/>
    <property type="project" value="UniProtKB-UniRule"/>
</dbReference>
<dbReference type="GO" id="GO:0004309">
    <property type="term" value="F:exopolyphosphatase activity"/>
    <property type="evidence" value="ECO:0007669"/>
    <property type="project" value="TreeGrafter"/>
</dbReference>
<dbReference type="GO" id="GO:0046872">
    <property type="term" value="F:metal ion binding"/>
    <property type="evidence" value="ECO:0007669"/>
    <property type="project" value="UniProtKB-UniRule"/>
</dbReference>
<dbReference type="GO" id="GO:0000166">
    <property type="term" value="F:nucleotide binding"/>
    <property type="evidence" value="ECO:0007669"/>
    <property type="project" value="UniProtKB-KW"/>
</dbReference>
<dbReference type="FunFam" id="3.40.1210.10:FF:000001">
    <property type="entry name" value="5'/3'-nucleotidase SurE"/>
    <property type="match status" value="1"/>
</dbReference>
<dbReference type="Gene3D" id="3.40.1210.10">
    <property type="entry name" value="Survival protein SurE-like phosphatase/nucleotidase"/>
    <property type="match status" value="1"/>
</dbReference>
<dbReference type="HAMAP" id="MF_00060">
    <property type="entry name" value="SurE"/>
    <property type="match status" value="1"/>
</dbReference>
<dbReference type="InterPro" id="IPR030048">
    <property type="entry name" value="SurE"/>
</dbReference>
<dbReference type="InterPro" id="IPR002828">
    <property type="entry name" value="SurE-like_Pase/nucleotidase"/>
</dbReference>
<dbReference type="InterPro" id="IPR036523">
    <property type="entry name" value="SurE-like_sf"/>
</dbReference>
<dbReference type="NCBIfam" id="NF001489">
    <property type="entry name" value="PRK00346.1-3"/>
    <property type="match status" value="1"/>
</dbReference>
<dbReference type="NCBIfam" id="NF001490">
    <property type="entry name" value="PRK00346.1-4"/>
    <property type="match status" value="1"/>
</dbReference>
<dbReference type="NCBIfam" id="TIGR00087">
    <property type="entry name" value="surE"/>
    <property type="match status" value="1"/>
</dbReference>
<dbReference type="PANTHER" id="PTHR30457">
    <property type="entry name" value="5'-NUCLEOTIDASE SURE"/>
    <property type="match status" value="1"/>
</dbReference>
<dbReference type="PANTHER" id="PTHR30457:SF12">
    <property type="entry name" value="5'_3'-NUCLEOTIDASE SURE"/>
    <property type="match status" value="1"/>
</dbReference>
<dbReference type="Pfam" id="PF01975">
    <property type="entry name" value="SurE"/>
    <property type="match status" value="1"/>
</dbReference>
<dbReference type="SUPFAM" id="SSF64167">
    <property type="entry name" value="SurE-like"/>
    <property type="match status" value="1"/>
</dbReference>
<keyword id="KW-0963">Cytoplasm</keyword>
<keyword id="KW-0378">Hydrolase</keyword>
<keyword id="KW-0479">Metal-binding</keyword>
<keyword id="KW-0547">Nucleotide-binding</keyword>
<keyword id="KW-1185">Reference proteome</keyword>
<protein>
    <recommendedName>
        <fullName evidence="1">5'-nucleotidase SurE</fullName>
        <ecNumber evidence="1">3.1.3.5</ecNumber>
    </recommendedName>
    <alternativeName>
        <fullName evidence="1">Nucleoside 5'-monophosphate phosphohydrolase</fullName>
    </alternativeName>
</protein>
<feature type="chain" id="PRO_1000202373" description="5'-nucleotidase SurE">
    <location>
        <begin position="1"/>
        <end position="248"/>
    </location>
</feature>
<feature type="binding site" evidence="1">
    <location>
        <position position="8"/>
    </location>
    <ligand>
        <name>a divalent metal cation</name>
        <dbReference type="ChEBI" id="CHEBI:60240"/>
    </ligand>
</feature>
<feature type="binding site" evidence="1">
    <location>
        <position position="9"/>
    </location>
    <ligand>
        <name>a divalent metal cation</name>
        <dbReference type="ChEBI" id="CHEBI:60240"/>
    </ligand>
</feature>
<feature type="binding site" evidence="1">
    <location>
        <position position="39"/>
    </location>
    <ligand>
        <name>a divalent metal cation</name>
        <dbReference type="ChEBI" id="CHEBI:60240"/>
    </ligand>
</feature>
<feature type="binding site" evidence="1">
    <location>
        <position position="92"/>
    </location>
    <ligand>
        <name>a divalent metal cation</name>
        <dbReference type="ChEBI" id="CHEBI:60240"/>
    </ligand>
</feature>
<accession>C4LBQ6</accession>
<sequence>MKILVSNDDGVNAQGLHCLSEALCSLGEVIVVAPDRNRSGASNSLTLENPIRVETLETGKRYSVKGTPTDCVHFAVNKLLDPWPDIVVSGINHGANLGDDVIYSGTVAAATEGRHMGLPAVAVSLVGETHFASAAHYACLLVSRLRTHPLPSDQILNVNVPDLPLEQIKGIKVTRLGNRHRGEKMIVMQDPRGKPVYWIGPPGEKQDAGEGTDFHAIEQGYVSITPLQVDMTAYGSVSELTTWVGEFK</sequence>